<feature type="chain" id="PRO_0000367221" description="UPF0173 metal-dependent hydrolase THEYE_A0282">
    <location>
        <begin position="1"/>
        <end position="267"/>
    </location>
</feature>
<gene>
    <name type="ordered locus">THEYE_A0282</name>
</gene>
<name>Y282_THEYD</name>
<keyword id="KW-0378">Hydrolase</keyword>
<keyword id="KW-1185">Reference proteome</keyword>
<reference key="1">
    <citation type="submission" date="2008-08" db="EMBL/GenBank/DDBJ databases">
        <title>The complete genome sequence of Thermodesulfovibrio yellowstonii strain ATCC 51303 / DSM 11347 / YP87.</title>
        <authorList>
            <person name="Dodson R.J."/>
            <person name="Durkin A.S."/>
            <person name="Wu M."/>
            <person name="Eisen J."/>
            <person name="Sutton G."/>
        </authorList>
    </citation>
    <scope>NUCLEOTIDE SEQUENCE [LARGE SCALE GENOMIC DNA]</scope>
    <source>
        <strain>ATCC 51303 / DSM 11347 / YP87</strain>
    </source>
</reference>
<comment type="similarity">
    <text evidence="1">Belongs to the UPF0173 family.</text>
</comment>
<sequence>MKKLIFLLLIILLPVASFGATEITWYGHSSFKIQTPNGKVLLIDPWLTNPANKEGKRHLKELPKVDLILLTHAHGDHIGNSIEIAKETGAKLVATYDLGKAIVKYAGYPEKQFGYETTGNFGGEITLLNGEVKILFVPAVHSSALEIPDSPKSLIYGGNPGGFLISIKNGPTLYHTGDTDLFEDMKLLGLMYKVDIMMVCIGDKFTMGPKRAAIATKFVNPKMVIPMHFGTFPMLNGTVEEFEKEIAEQKIQTKILKIKIGETVKIE</sequence>
<proteinExistence type="inferred from homology"/>
<organism>
    <name type="scientific">Thermodesulfovibrio yellowstonii (strain ATCC 51303 / DSM 11347 / YP87)</name>
    <dbReference type="NCBI Taxonomy" id="289376"/>
    <lineage>
        <taxon>Bacteria</taxon>
        <taxon>Pseudomonadati</taxon>
        <taxon>Nitrospirota</taxon>
        <taxon>Thermodesulfovibrionia</taxon>
        <taxon>Thermodesulfovibrionales</taxon>
        <taxon>Thermodesulfovibrionaceae</taxon>
        <taxon>Thermodesulfovibrio</taxon>
    </lineage>
</organism>
<evidence type="ECO:0000255" key="1">
    <source>
        <dbReference type="HAMAP-Rule" id="MF_00457"/>
    </source>
</evidence>
<dbReference type="EMBL" id="CP001147">
    <property type="protein sequence ID" value="ACI21352.1"/>
    <property type="molecule type" value="Genomic_DNA"/>
</dbReference>
<dbReference type="RefSeq" id="WP_012546070.1">
    <property type="nucleotide sequence ID" value="NC_011296.1"/>
</dbReference>
<dbReference type="RefSeq" id="YP_002248130.1">
    <property type="nucleotide sequence ID" value="NC_011296.1"/>
</dbReference>
<dbReference type="SMR" id="B5YIH1"/>
<dbReference type="STRING" id="289376.THEYE_A0282"/>
<dbReference type="EnsemblBacteria" id="ACI21352">
    <property type="protein sequence ID" value="ACI21352"/>
    <property type="gene ID" value="THEYE_A0282"/>
</dbReference>
<dbReference type="KEGG" id="tye:THEYE_A0282"/>
<dbReference type="PATRIC" id="fig|289376.4.peg.278"/>
<dbReference type="eggNOG" id="COG2220">
    <property type="taxonomic scope" value="Bacteria"/>
</dbReference>
<dbReference type="HOGENOM" id="CLU_070010_4_0_0"/>
<dbReference type="InParanoid" id="B5YIH1"/>
<dbReference type="OrthoDB" id="9803916at2"/>
<dbReference type="Proteomes" id="UP000000718">
    <property type="component" value="Chromosome"/>
</dbReference>
<dbReference type="GO" id="GO:0016787">
    <property type="term" value="F:hydrolase activity"/>
    <property type="evidence" value="ECO:0000318"/>
    <property type="project" value="GO_Central"/>
</dbReference>
<dbReference type="Gene3D" id="3.60.15.10">
    <property type="entry name" value="Ribonuclease Z/Hydroxyacylglutathione hydrolase-like"/>
    <property type="match status" value="1"/>
</dbReference>
<dbReference type="HAMAP" id="MF_00457">
    <property type="entry name" value="UPF0173"/>
    <property type="match status" value="1"/>
</dbReference>
<dbReference type="InterPro" id="IPR001279">
    <property type="entry name" value="Metallo-B-lactamas"/>
</dbReference>
<dbReference type="InterPro" id="IPR036866">
    <property type="entry name" value="RibonucZ/Hydroxyglut_hydro"/>
</dbReference>
<dbReference type="InterPro" id="IPR022877">
    <property type="entry name" value="UPF0173"/>
</dbReference>
<dbReference type="InterPro" id="IPR050114">
    <property type="entry name" value="UPF0173_UPF0282_UlaG_hydrolase"/>
</dbReference>
<dbReference type="NCBIfam" id="NF001911">
    <property type="entry name" value="PRK00685.1"/>
    <property type="match status" value="1"/>
</dbReference>
<dbReference type="PANTHER" id="PTHR43546:SF3">
    <property type="entry name" value="UPF0173 METAL-DEPENDENT HYDROLASE MJ1163"/>
    <property type="match status" value="1"/>
</dbReference>
<dbReference type="PANTHER" id="PTHR43546">
    <property type="entry name" value="UPF0173 METAL-DEPENDENT HYDROLASE MJ1163-RELATED"/>
    <property type="match status" value="1"/>
</dbReference>
<dbReference type="Pfam" id="PF13483">
    <property type="entry name" value="Lactamase_B_3"/>
    <property type="match status" value="1"/>
</dbReference>
<dbReference type="SMART" id="SM00849">
    <property type="entry name" value="Lactamase_B"/>
    <property type="match status" value="1"/>
</dbReference>
<dbReference type="SUPFAM" id="SSF56281">
    <property type="entry name" value="Metallo-hydrolase/oxidoreductase"/>
    <property type="match status" value="1"/>
</dbReference>
<accession>B5YIH1</accession>
<protein>
    <recommendedName>
        <fullName evidence="1">UPF0173 metal-dependent hydrolase THEYE_A0282</fullName>
    </recommendedName>
</protein>